<protein>
    <recommendedName>
        <fullName evidence="1">Bifunctional protein HldE</fullName>
    </recommendedName>
    <domain>
        <recommendedName>
            <fullName evidence="1">D-beta-D-heptose 7-phosphate kinase</fullName>
            <ecNumber evidence="1">2.7.1.167</ecNumber>
        </recommendedName>
        <alternativeName>
            <fullName evidence="1">D-beta-D-heptose 7-phosphotransferase</fullName>
        </alternativeName>
        <alternativeName>
            <fullName evidence="1">D-glycero-beta-D-manno-heptose-7-phosphate kinase</fullName>
        </alternativeName>
    </domain>
    <domain>
        <recommendedName>
            <fullName evidence="1">D-beta-D-heptose 1-phosphate adenylyltransferase</fullName>
            <ecNumber evidence="1">2.7.7.70</ecNumber>
        </recommendedName>
        <alternativeName>
            <fullName evidence="1">D-glycero-beta-D-manno-heptose 1-phosphate adenylyltransferase</fullName>
        </alternativeName>
    </domain>
</protein>
<keyword id="KW-0067">ATP-binding</keyword>
<keyword id="KW-0119">Carbohydrate metabolism</keyword>
<keyword id="KW-0418">Kinase</keyword>
<keyword id="KW-0511">Multifunctional enzyme</keyword>
<keyword id="KW-0547">Nucleotide-binding</keyword>
<keyword id="KW-0548">Nucleotidyltransferase</keyword>
<keyword id="KW-0808">Transferase</keyword>
<gene>
    <name evidence="1" type="primary">hldE</name>
    <name type="ordered locus">Shewmr4_3086</name>
</gene>
<name>HLDE_SHESM</name>
<organism>
    <name type="scientific">Shewanella sp. (strain MR-4)</name>
    <dbReference type="NCBI Taxonomy" id="60480"/>
    <lineage>
        <taxon>Bacteria</taxon>
        <taxon>Pseudomonadati</taxon>
        <taxon>Pseudomonadota</taxon>
        <taxon>Gammaproteobacteria</taxon>
        <taxon>Alteromonadales</taxon>
        <taxon>Shewanellaceae</taxon>
        <taxon>Shewanella</taxon>
    </lineage>
</organism>
<sequence>MKVSLPAFEKAKVLVVGDVMLDRYWVGPTGRISPEAPVPVVKINQVEDRPGGAANVALNIATLGGQVQLAGLVGEDDTAKALTLGVQALGVEPQWLKIADKPTITKLRVLSRNQQLIRLDFEESFDKQDSARLLKQSEALLDSVDVVVLSDYAKGAIDKPQDFIALARAKGVKVLVDPKGSDFSRYHGASLITPNMSEFEAVVGAVTSEADLLEKARGLLNKHQFDAILVTRSEKGMTLVTANAPELHIPTVAREVYDVTGAGDTVISALATSLAAGAELPQACAIANTAAGVVVGKLGTSTVSRIELIEALALHHGESGFGVVSEDQLAYALEQAKLRGERVVMTNGCFDILHAGHVSYLKQAKALGDRLIVAVNDDASVKRLKGEGRPVNQVDRRMAVLAGLAAVDWVVPFSEDTPQRIIARLLPDLLVKGGDYKIEDIAGGAEVIAAGGQVQVLGFEDGISTTAIIQNIMAKQ</sequence>
<reference key="1">
    <citation type="submission" date="2006-08" db="EMBL/GenBank/DDBJ databases">
        <title>Complete sequence of Shewanella sp. MR-4.</title>
        <authorList>
            <consortium name="US DOE Joint Genome Institute"/>
            <person name="Copeland A."/>
            <person name="Lucas S."/>
            <person name="Lapidus A."/>
            <person name="Barry K."/>
            <person name="Detter J.C."/>
            <person name="Glavina del Rio T."/>
            <person name="Hammon N."/>
            <person name="Israni S."/>
            <person name="Dalin E."/>
            <person name="Tice H."/>
            <person name="Pitluck S."/>
            <person name="Kiss H."/>
            <person name="Brettin T."/>
            <person name="Bruce D."/>
            <person name="Han C."/>
            <person name="Tapia R."/>
            <person name="Gilna P."/>
            <person name="Schmutz J."/>
            <person name="Larimer F."/>
            <person name="Land M."/>
            <person name="Hauser L."/>
            <person name="Kyrpides N."/>
            <person name="Mikhailova N."/>
            <person name="Nealson K."/>
            <person name="Konstantinidis K."/>
            <person name="Klappenbach J."/>
            <person name="Tiedje J."/>
            <person name="Richardson P."/>
        </authorList>
    </citation>
    <scope>NUCLEOTIDE SEQUENCE [LARGE SCALE GENOMIC DNA]</scope>
    <source>
        <strain>MR-4</strain>
    </source>
</reference>
<evidence type="ECO:0000255" key="1">
    <source>
        <dbReference type="HAMAP-Rule" id="MF_01603"/>
    </source>
</evidence>
<feature type="chain" id="PRO_0000291691" description="Bifunctional protein HldE">
    <location>
        <begin position="1"/>
        <end position="476"/>
    </location>
</feature>
<feature type="region of interest" description="Ribokinase">
    <location>
        <begin position="1"/>
        <end position="319"/>
    </location>
</feature>
<feature type="region of interest" description="Cytidylyltransferase">
    <location>
        <begin position="345"/>
        <end position="476"/>
    </location>
</feature>
<feature type="active site" evidence="1">
    <location>
        <position position="264"/>
    </location>
</feature>
<feature type="binding site" evidence="1">
    <location>
        <begin position="195"/>
        <end position="198"/>
    </location>
    <ligand>
        <name>ATP</name>
        <dbReference type="ChEBI" id="CHEBI:30616"/>
    </ligand>
</feature>
<accession>Q0HFL0</accession>
<proteinExistence type="inferred from homology"/>
<dbReference type="EC" id="2.7.1.167" evidence="1"/>
<dbReference type="EC" id="2.7.7.70" evidence="1"/>
<dbReference type="EMBL" id="CP000446">
    <property type="protein sequence ID" value="ABI40157.1"/>
    <property type="molecule type" value="Genomic_DNA"/>
</dbReference>
<dbReference type="RefSeq" id="WP_011623830.1">
    <property type="nucleotide sequence ID" value="NC_008321.1"/>
</dbReference>
<dbReference type="SMR" id="Q0HFL0"/>
<dbReference type="KEGG" id="she:Shewmr4_3086"/>
<dbReference type="HOGENOM" id="CLU_021150_2_1_6"/>
<dbReference type="UniPathway" id="UPA00356">
    <property type="reaction ID" value="UER00437"/>
</dbReference>
<dbReference type="UniPathway" id="UPA00356">
    <property type="reaction ID" value="UER00439"/>
</dbReference>
<dbReference type="GO" id="GO:0005829">
    <property type="term" value="C:cytosol"/>
    <property type="evidence" value="ECO:0007669"/>
    <property type="project" value="TreeGrafter"/>
</dbReference>
<dbReference type="GO" id="GO:0005524">
    <property type="term" value="F:ATP binding"/>
    <property type="evidence" value="ECO:0007669"/>
    <property type="project" value="UniProtKB-UniRule"/>
</dbReference>
<dbReference type="GO" id="GO:0033785">
    <property type="term" value="F:heptose 7-phosphate kinase activity"/>
    <property type="evidence" value="ECO:0007669"/>
    <property type="project" value="UniProtKB-UniRule"/>
</dbReference>
<dbReference type="GO" id="GO:0033786">
    <property type="term" value="F:heptose-1-phosphate adenylyltransferase activity"/>
    <property type="evidence" value="ECO:0007669"/>
    <property type="project" value="UniProtKB-UniRule"/>
</dbReference>
<dbReference type="GO" id="GO:0016773">
    <property type="term" value="F:phosphotransferase activity, alcohol group as acceptor"/>
    <property type="evidence" value="ECO:0007669"/>
    <property type="project" value="InterPro"/>
</dbReference>
<dbReference type="GO" id="GO:0097171">
    <property type="term" value="P:ADP-L-glycero-beta-D-manno-heptose biosynthetic process"/>
    <property type="evidence" value="ECO:0007669"/>
    <property type="project" value="UniProtKB-UniPathway"/>
</dbReference>
<dbReference type="CDD" id="cd01172">
    <property type="entry name" value="RfaE_like"/>
    <property type="match status" value="1"/>
</dbReference>
<dbReference type="FunFam" id="3.40.1190.20:FF:000002">
    <property type="entry name" value="Bifunctional protein HldE"/>
    <property type="match status" value="1"/>
</dbReference>
<dbReference type="FunFam" id="3.40.50.620:FF:000028">
    <property type="entry name" value="Bifunctional protein HldE"/>
    <property type="match status" value="1"/>
</dbReference>
<dbReference type="Gene3D" id="3.40.1190.20">
    <property type="match status" value="1"/>
</dbReference>
<dbReference type="Gene3D" id="3.40.50.620">
    <property type="entry name" value="HUPs"/>
    <property type="match status" value="1"/>
</dbReference>
<dbReference type="HAMAP" id="MF_01603">
    <property type="entry name" value="HldE"/>
    <property type="match status" value="1"/>
</dbReference>
<dbReference type="InterPro" id="IPR023030">
    <property type="entry name" value="Bifunc_HldE"/>
</dbReference>
<dbReference type="InterPro" id="IPR002173">
    <property type="entry name" value="Carboh/pur_kinase_PfkB_CS"/>
</dbReference>
<dbReference type="InterPro" id="IPR004821">
    <property type="entry name" value="Cyt_trans-like"/>
</dbReference>
<dbReference type="InterPro" id="IPR011611">
    <property type="entry name" value="PfkB_dom"/>
</dbReference>
<dbReference type="InterPro" id="IPR011913">
    <property type="entry name" value="RfaE_dom_I"/>
</dbReference>
<dbReference type="InterPro" id="IPR011914">
    <property type="entry name" value="RfaE_dom_II"/>
</dbReference>
<dbReference type="InterPro" id="IPR029056">
    <property type="entry name" value="Ribokinase-like"/>
</dbReference>
<dbReference type="InterPro" id="IPR014729">
    <property type="entry name" value="Rossmann-like_a/b/a_fold"/>
</dbReference>
<dbReference type="NCBIfam" id="TIGR00125">
    <property type="entry name" value="cyt_tran_rel"/>
    <property type="match status" value="1"/>
</dbReference>
<dbReference type="NCBIfam" id="NF008454">
    <property type="entry name" value="PRK11316.1"/>
    <property type="match status" value="1"/>
</dbReference>
<dbReference type="NCBIfam" id="TIGR02198">
    <property type="entry name" value="rfaE_dom_I"/>
    <property type="match status" value="1"/>
</dbReference>
<dbReference type="NCBIfam" id="TIGR02199">
    <property type="entry name" value="rfaE_dom_II"/>
    <property type="match status" value="1"/>
</dbReference>
<dbReference type="PANTHER" id="PTHR46969">
    <property type="entry name" value="BIFUNCTIONAL PROTEIN HLDE"/>
    <property type="match status" value="1"/>
</dbReference>
<dbReference type="PANTHER" id="PTHR46969:SF1">
    <property type="entry name" value="BIFUNCTIONAL PROTEIN HLDE"/>
    <property type="match status" value="1"/>
</dbReference>
<dbReference type="Pfam" id="PF01467">
    <property type="entry name" value="CTP_transf_like"/>
    <property type="match status" value="1"/>
</dbReference>
<dbReference type="Pfam" id="PF00294">
    <property type="entry name" value="PfkB"/>
    <property type="match status" value="1"/>
</dbReference>
<dbReference type="SUPFAM" id="SSF52374">
    <property type="entry name" value="Nucleotidylyl transferase"/>
    <property type="match status" value="1"/>
</dbReference>
<dbReference type="SUPFAM" id="SSF53613">
    <property type="entry name" value="Ribokinase-like"/>
    <property type="match status" value="1"/>
</dbReference>
<dbReference type="PROSITE" id="PS00583">
    <property type="entry name" value="PFKB_KINASES_1"/>
    <property type="match status" value="1"/>
</dbReference>
<dbReference type="PROSITE" id="PS00584">
    <property type="entry name" value="PFKB_KINASES_2"/>
    <property type="match status" value="1"/>
</dbReference>
<comment type="function">
    <text evidence="1">Catalyzes the phosphorylation of D-glycero-D-manno-heptose 7-phosphate at the C-1 position to selectively form D-glycero-beta-D-manno-heptose-1,7-bisphosphate.</text>
</comment>
<comment type="function">
    <text evidence="1">Catalyzes the ADP transfer from ATP to D-glycero-beta-D-manno-heptose 1-phosphate, yielding ADP-D-glycero-beta-D-manno-heptose.</text>
</comment>
<comment type="catalytic activity">
    <reaction evidence="1">
        <text>D-glycero-beta-D-manno-heptose 7-phosphate + ATP = D-glycero-beta-D-manno-heptose 1,7-bisphosphate + ADP + H(+)</text>
        <dbReference type="Rhea" id="RHEA:27473"/>
        <dbReference type="ChEBI" id="CHEBI:15378"/>
        <dbReference type="ChEBI" id="CHEBI:30616"/>
        <dbReference type="ChEBI" id="CHEBI:60204"/>
        <dbReference type="ChEBI" id="CHEBI:60208"/>
        <dbReference type="ChEBI" id="CHEBI:456216"/>
        <dbReference type="EC" id="2.7.1.167"/>
    </reaction>
</comment>
<comment type="catalytic activity">
    <reaction evidence="1">
        <text>D-glycero-beta-D-manno-heptose 1-phosphate + ATP + H(+) = ADP-D-glycero-beta-D-manno-heptose + diphosphate</text>
        <dbReference type="Rhea" id="RHEA:27465"/>
        <dbReference type="ChEBI" id="CHEBI:15378"/>
        <dbReference type="ChEBI" id="CHEBI:30616"/>
        <dbReference type="ChEBI" id="CHEBI:33019"/>
        <dbReference type="ChEBI" id="CHEBI:59967"/>
        <dbReference type="ChEBI" id="CHEBI:61593"/>
        <dbReference type="EC" id="2.7.7.70"/>
    </reaction>
</comment>
<comment type="pathway">
    <text evidence="1">Nucleotide-sugar biosynthesis; ADP-L-glycero-beta-D-manno-heptose biosynthesis; ADP-L-glycero-beta-D-manno-heptose from D-glycero-beta-D-manno-heptose 7-phosphate: step 1/4.</text>
</comment>
<comment type="pathway">
    <text evidence="1">Nucleotide-sugar biosynthesis; ADP-L-glycero-beta-D-manno-heptose biosynthesis; ADP-L-glycero-beta-D-manno-heptose from D-glycero-beta-D-manno-heptose 7-phosphate: step 3/4.</text>
</comment>
<comment type="subunit">
    <text evidence="1">Homodimer.</text>
</comment>
<comment type="similarity">
    <text evidence="1">In the N-terminal section; belongs to the carbohydrate kinase PfkB family.</text>
</comment>
<comment type="similarity">
    <text evidence="1">In the C-terminal section; belongs to the cytidylyltransferase family.</text>
</comment>